<protein>
    <recommendedName>
        <fullName>Chorionic somatomammotropin hormone 1</fullName>
        <shortName>Choriomammotropin</shortName>
    </recommendedName>
    <alternativeName>
        <fullName>Lactogen</fullName>
    </alternativeName>
    <alternativeName>
        <fullName>Placental lactogen</fullName>
        <shortName>PL</shortName>
    </alternativeName>
</protein>
<organism>
    <name type="scientific">Homo sapiens</name>
    <name type="common">Human</name>
    <dbReference type="NCBI Taxonomy" id="9606"/>
    <lineage>
        <taxon>Eukaryota</taxon>
        <taxon>Metazoa</taxon>
        <taxon>Chordata</taxon>
        <taxon>Craniata</taxon>
        <taxon>Vertebrata</taxon>
        <taxon>Euteleostomi</taxon>
        <taxon>Mammalia</taxon>
        <taxon>Eutheria</taxon>
        <taxon>Euarchontoglires</taxon>
        <taxon>Primates</taxon>
        <taxon>Haplorrhini</taxon>
        <taxon>Catarrhini</taxon>
        <taxon>Hominidae</taxon>
        <taxon>Homo</taxon>
    </lineage>
</organism>
<sequence>MAPGSRTSLLLAFALLCLPWLQEAGAVQTVPLSRLFDHAMLQAHRAHQLAIDTYQEFEETYIPKDQKYSFLHDSQTSFCFSDSIPTPSNMEETQQKSNLELLRISLLLIESWLEPVRFLRSMFANNLVYDTSDSDDYHLLKDLEEGIQTLMGRLEDGSRRTGQILKQTYSKFDTNSHNHDALLKNYGLLYCFRKDMDKVETFLRMVQCRSVEGSCGF</sequence>
<keyword id="KW-0002">3D-structure</keyword>
<keyword id="KW-0903">Direct protein sequencing</keyword>
<keyword id="KW-1015">Disulfide bond</keyword>
<keyword id="KW-0372">Hormone</keyword>
<keyword id="KW-0479">Metal-binding</keyword>
<keyword id="KW-1185">Reference proteome</keyword>
<keyword id="KW-0964">Secreted</keyword>
<keyword id="KW-0732">Signal</keyword>
<keyword id="KW-0862">Zinc</keyword>
<dbReference type="EMBL" id="K02401">
    <property type="protein sequence ID" value="AAA52115.1"/>
    <property type="molecule type" value="Genomic_DNA"/>
</dbReference>
<dbReference type="EMBL" id="J03071">
    <property type="protein sequence ID" value="AAA52551.1"/>
    <property type="molecule type" value="Genomic_DNA"/>
</dbReference>
<dbReference type="EMBL" id="J00118">
    <property type="protein sequence ID" value="AAA98621.1"/>
    <property type="molecule type" value="mRNA"/>
</dbReference>
<dbReference type="EMBL" id="BT006926">
    <property type="protein sequence ID" value="AAP35572.1"/>
    <property type="molecule type" value="mRNA"/>
</dbReference>
<dbReference type="EMBL" id="BC002717">
    <property type="protein sequence ID" value="AAH02717.1"/>
    <property type="molecule type" value="mRNA"/>
</dbReference>
<dbReference type="EMBL" id="BC005921">
    <property type="protein sequence ID" value="AAH05921.1"/>
    <property type="molecule type" value="mRNA"/>
</dbReference>
<dbReference type="EMBL" id="BC020756">
    <property type="protein sequence ID" value="AAH20756.1"/>
    <property type="molecule type" value="mRNA"/>
</dbReference>
<dbReference type="EMBL" id="BC062775">
    <property type="protein sequence ID" value="AAH62775.1"/>
    <property type="molecule type" value="mRNA"/>
</dbReference>
<dbReference type="CCDS" id="CCDS11649.1"/>
<dbReference type="RefSeq" id="NP_001308.1">
    <property type="nucleotide sequence ID" value="NM_001317.6"/>
</dbReference>
<dbReference type="PDB" id="1Z7C">
    <property type="method" value="X-ray"/>
    <property type="resolution" value="2.00 A"/>
    <property type="chains" value="A=27-217"/>
</dbReference>
<dbReference type="PDBsum" id="1Z7C"/>
<dbReference type="SMR" id="P0DML2"/>
<dbReference type="BioGRID" id="107829">
    <property type="interactions" value="14"/>
</dbReference>
<dbReference type="FunCoup" id="P0DML2">
    <property type="interactions" value="1028"/>
</dbReference>
<dbReference type="IntAct" id="P0DML2">
    <property type="interactions" value="10"/>
</dbReference>
<dbReference type="STRING" id="9606.ENSP00000316416"/>
<dbReference type="iPTMnet" id="P0DML2"/>
<dbReference type="MetOSite" id="P0DML2"/>
<dbReference type="PhosphoSitePlus" id="P0DML2"/>
<dbReference type="BioMuta" id="CSH1"/>
<dbReference type="MassIVE" id="P0DML2"/>
<dbReference type="PaxDb" id="9606-ENSP00000316416"/>
<dbReference type="PeptideAtlas" id="P0DML2"/>
<dbReference type="ABCD" id="P0DML2">
    <property type="antibodies" value="1 sequenced antibody"/>
</dbReference>
<dbReference type="Antibodypedia" id="18837">
    <property type="antibodies" value="449 antibodies from 32 providers"/>
</dbReference>
<dbReference type="DNASU" id="1442"/>
<dbReference type="Ensembl" id="ENST00000316193.13">
    <property type="protein sequence ID" value="ENSP00000316416.8"/>
    <property type="gene ID" value="ENSG00000136488.15"/>
</dbReference>
<dbReference type="GeneID" id="1442"/>
<dbReference type="KEGG" id="hsa:1442"/>
<dbReference type="MANE-Select" id="ENST00000316193.13">
    <property type="protein sequence ID" value="ENSP00000316416.8"/>
    <property type="RefSeq nucleotide sequence ID" value="NM_001317.6"/>
    <property type="RefSeq protein sequence ID" value="NP_001308.1"/>
</dbReference>
<dbReference type="UCSC" id="uc002jcs.3">
    <property type="organism name" value="human"/>
</dbReference>
<dbReference type="AGR" id="HGNC:2440"/>
<dbReference type="CTD" id="1442"/>
<dbReference type="DisGeNET" id="1442"/>
<dbReference type="GeneCards" id="CSH1"/>
<dbReference type="HGNC" id="HGNC:2440">
    <property type="gene designation" value="CSH1"/>
</dbReference>
<dbReference type="HPA" id="ENSG00000136488">
    <property type="expression patterns" value="Tissue enriched (placenta)"/>
</dbReference>
<dbReference type="MIM" id="150200">
    <property type="type" value="gene"/>
</dbReference>
<dbReference type="neXtProt" id="NX_P0DML2"/>
<dbReference type="OpenTargets" id="ENSG00000136488"/>
<dbReference type="VEuPathDB" id="HostDB:ENSG00000136488"/>
<dbReference type="eggNOG" id="ENOG502R5GJ">
    <property type="taxonomic scope" value="Eukaryota"/>
</dbReference>
<dbReference type="GeneTree" id="ENSGT00950000182818"/>
<dbReference type="HOGENOM" id="CLU_088274_2_1_1"/>
<dbReference type="InParanoid" id="P0DML2"/>
<dbReference type="OMA" id="NSHNHEA"/>
<dbReference type="OrthoDB" id="9537348at2759"/>
<dbReference type="PAN-GO" id="P0DML2">
    <property type="GO annotations" value="10 GO annotations based on evolutionary models"/>
</dbReference>
<dbReference type="PhylomeDB" id="P0DML2"/>
<dbReference type="PathwayCommons" id="P0DML2"/>
<dbReference type="Reactome" id="R-HSA-1170546">
    <property type="pathway name" value="Prolactin receptor signaling"/>
</dbReference>
<dbReference type="Reactome" id="R-HSA-982772">
    <property type="pathway name" value="Growth hormone receptor signaling"/>
</dbReference>
<dbReference type="SignaLink" id="P0DML2"/>
<dbReference type="BioGRID-ORCS" id="1442">
    <property type="hits" value="13 hits in 1018 CRISPR screens"/>
</dbReference>
<dbReference type="ChiTaRS" id="CSH1">
    <property type="organism name" value="human"/>
</dbReference>
<dbReference type="EvolutionaryTrace" id="P0DML2"/>
<dbReference type="GenomeRNAi" id="1442"/>
<dbReference type="Pharos" id="P0DML2">
    <property type="development level" value="Tbio"/>
</dbReference>
<dbReference type="PRO" id="PR:P0DML2"/>
<dbReference type="Proteomes" id="UP000005640">
    <property type="component" value="Chromosome 17"/>
</dbReference>
<dbReference type="RNAct" id="P0DML2">
    <property type="molecule type" value="protein"/>
</dbReference>
<dbReference type="Bgee" id="ENSG00000136488">
    <property type="expression patterns" value="Expressed in placenta and 36 other cell types or tissues"/>
</dbReference>
<dbReference type="ExpressionAtlas" id="P0DML2">
    <property type="expression patterns" value="baseline and differential"/>
</dbReference>
<dbReference type="GO" id="GO:0005783">
    <property type="term" value="C:endoplasmic reticulum"/>
    <property type="evidence" value="ECO:0000314"/>
    <property type="project" value="AgBase"/>
</dbReference>
<dbReference type="GO" id="GO:0031904">
    <property type="term" value="C:endosome lumen"/>
    <property type="evidence" value="ECO:0000304"/>
    <property type="project" value="Reactome"/>
</dbReference>
<dbReference type="GO" id="GO:0005576">
    <property type="term" value="C:extracellular region"/>
    <property type="evidence" value="ECO:0000304"/>
    <property type="project" value="Reactome"/>
</dbReference>
<dbReference type="GO" id="GO:0005615">
    <property type="term" value="C:extracellular space"/>
    <property type="evidence" value="ECO:0000318"/>
    <property type="project" value="GO_Central"/>
</dbReference>
<dbReference type="GO" id="GO:0031982">
    <property type="term" value="C:vesicle"/>
    <property type="evidence" value="ECO:0000314"/>
    <property type="project" value="AgBase"/>
</dbReference>
<dbReference type="GO" id="GO:0008083">
    <property type="term" value="F:growth factor activity"/>
    <property type="evidence" value="ECO:0000318"/>
    <property type="project" value="GO_Central"/>
</dbReference>
<dbReference type="GO" id="GO:0005131">
    <property type="term" value="F:growth hormone receptor binding"/>
    <property type="evidence" value="ECO:0000318"/>
    <property type="project" value="GO_Central"/>
</dbReference>
<dbReference type="GO" id="GO:0005179">
    <property type="term" value="F:hormone activity"/>
    <property type="evidence" value="ECO:0000318"/>
    <property type="project" value="GO_Central"/>
</dbReference>
<dbReference type="GO" id="GO:0046872">
    <property type="term" value="F:metal ion binding"/>
    <property type="evidence" value="ECO:0007669"/>
    <property type="project" value="UniProtKB-KW"/>
</dbReference>
<dbReference type="GO" id="GO:0048513">
    <property type="term" value="P:animal organ development"/>
    <property type="evidence" value="ECO:0000318"/>
    <property type="project" value="GO_Central"/>
</dbReference>
<dbReference type="GO" id="GO:0060396">
    <property type="term" value="P:growth hormone receptor signaling pathway"/>
    <property type="evidence" value="ECO:0000318"/>
    <property type="project" value="GO_Central"/>
</dbReference>
<dbReference type="GO" id="GO:0046427">
    <property type="term" value="P:positive regulation of receptor signaling pathway via JAK-STAT"/>
    <property type="evidence" value="ECO:0000318"/>
    <property type="project" value="GO_Central"/>
</dbReference>
<dbReference type="GO" id="GO:0031667">
    <property type="term" value="P:response to nutrient levels"/>
    <property type="evidence" value="ECO:0000318"/>
    <property type="project" value="GO_Central"/>
</dbReference>
<dbReference type="CDD" id="cd10285">
    <property type="entry name" value="somatotropin_like"/>
    <property type="match status" value="1"/>
</dbReference>
<dbReference type="FunFam" id="1.20.1250.10:FF:000012">
    <property type="entry name" value="Growth hormone 1"/>
    <property type="match status" value="1"/>
</dbReference>
<dbReference type="Gene3D" id="1.20.1250.10">
    <property type="match status" value="1"/>
</dbReference>
<dbReference type="InterPro" id="IPR009079">
    <property type="entry name" value="4_helix_cytokine-like_core"/>
</dbReference>
<dbReference type="InterPro" id="IPR034975">
    <property type="entry name" value="Somatotropin"/>
</dbReference>
<dbReference type="InterPro" id="IPR001400">
    <property type="entry name" value="Somatotropin/Prolactin"/>
</dbReference>
<dbReference type="InterPro" id="IPR018116">
    <property type="entry name" value="Somatotropin_CS"/>
</dbReference>
<dbReference type="PANTHER" id="PTHR11417:SF67">
    <property type="entry name" value="CHORIONIC SOMATOMAMMOTROPIN HORMONE 1-RELATED"/>
    <property type="match status" value="1"/>
</dbReference>
<dbReference type="PANTHER" id="PTHR11417">
    <property type="entry name" value="SOMATOTROPIN,PROLACTIN"/>
    <property type="match status" value="1"/>
</dbReference>
<dbReference type="Pfam" id="PF00103">
    <property type="entry name" value="Hormone_1"/>
    <property type="match status" value="1"/>
</dbReference>
<dbReference type="PRINTS" id="PR00836">
    <property type="entry name" value="SOMATOTROPIN"/>
</dbReference>
<dbReference type="SUPFAM" id="SSF47266">
    <property type="entry name" value="4-helical cytokines"/>
    <property type="match status" value="1"/>
</dbReference>
<dbReference type="PROSITE" id="PS00266">
    <property type="entry name" value="SOMATOTROPIN_1"/>
    <property type="match status" value="1"/>
</dbReference>
<dbReference type="PROSITE" id="PS00338">
    <property type="entry name" value="SOMATOTROPIN_2"/>
    <property type="match status" value="1"/>
</dbReference>
<feature type="signal peptide" evidence="3 4">
    <location>
        <begin position="1"/>
        <end position="26"/>
    </location>
</feature>
<feature type="chain" id="PRO_0000032958" description="Chorionic somatomammotropin hormone 1">
    <location>
        <begin position="27"/>
        <end position="217"/>
    </location>
</feature>
<feature type="binding site">
    <location>
        <position position="44"/>
    </location>
    <ligand>
        <name>Zn(2+)</name>
        <dbReference type="ChEBI" id="CHEBI:29105"/>
    </ligand>
</feature>
<feature type="binding site">
    <location>
        <position position="200"/>
    </location>
    <ligand>
        <name>Zn(2+)</name>
        <dbReference type="ChEBI" id="CHEBI:29105"/>
    </ligand>
</feature>
<feature type="disulfide bond" evidence="1">
    <location>
        <begin position="79"/>
        <end position="191"/>
    </location>
</feature>
<feature type="disulfide bond" description="In monomeric form" evidence="1">
    <location>
        <begin position="208"/>
        <end position="215"/>
    </location>
</feature>
<feature type="disulfide bond" description="Interchain (with C-215); in dimeric form" evidence="1">
    <location>
        <position position="208"/>
    </location>
</feature>
<feature type="disulfide bond" description="Interchain (with C-208); in dimeric form" evidence="1">
    <location>
        <position position="215"/>
    </location>
</feature>
<feature type="sequence conflict" description="In Ref. 10; AA sequence." evidence="5" ref="10">
    <original>I</original>
    <variation>T</variation>
    <location>
        <position position="84"/>
    </location>
</feature>
<feature type="sequence conflict" description="In Ref. 10; AA sequence." evidence="5" ref="10">
    <location>
        <position position="95"/>
    </location>
</feature>
<feature type="sequence conflict" description="In Ref. 10; AA sequence." evidence="5" ref="10">
    <location>
        <position position="116"/>
    </location>
</feature>
<feature type="sequence conflict" description="In Ref. 10; AA sequence." evidence="5" ref="10">
    <original>SDD</original>
    <variation>BBS</variation>
    <location>
        <begin position="134"/>
        <end position="136"/>
    </location>
</feature>
<feature type="helix" evidence="6">
    <location>
        <begin position="32"/>
        <end position="61"/>
    </location>
</feature>
<feature type="helix" evidence="6">
    <location>
        <begin position="64"/>
        <end position="66"/>
    </location>
</feature>
<feature type="turn" evidence="6">
    <location>
        <begin position="67"/>
        <end position="70"/>
    </location>
</feature>
<feature type="helix" evidence="6">
    <location>
        <begin position="80"/>
        <end position="82"/>
    </location>
</feature>
<feature type="helix" evidence="6">
    <location>
        <begin position="99"/>
        <end position="110"/>
    </location>
</feature>
<feature type="turn" evidence="6">
    <location>
        <begin position="111"/>
        <end position="114"/>
    </location>
</feature>
<feature type="helix" evidence="6">
    <location>
        <begin position="115"/>
        <end position="123"/>
    </location>
</feature>
<feature type="strand" evidence="6">
    <location>
        <begin position="124"/>
        <end position="126"/>
    </location>
</feature>
<feature type="turn" evidence="6">
    <location>
        <begin position="133"/>
        <end position="135"/>
    </location>
</feature>
<feature type="helix" evidence="6">
    <location>
        <begin position="136"/>
        <end position="138"/>
    </location>
</feature>
<feature type="helix" evidence="6">
    <location>
        <begin position="139"/>
        <end position="154"/>
    </location>
</feature>
<feature type="helix" evidence="6">
    <location>
        <begin position="181"/>
        <end position="210"/>
    </location>
</feature>
<name>CSH1_HUMAN</name>
<reference key="1">
    <citation type="journal article" date="1984" name="J. Biol. Chem.">
        <title>Analysis of a major human chorionic somatomammotropin gene. Evidence for two functional promoter elements.</title>
        <authorList>
            <person name="Selby M.J."/>
            <person name="Barta A."/>
            <person name="Baxter J.D."/>
            <person name="Bell G.I."/>
            <person name="Eberhardt N.L."/>
        </authorList>
    </citation>
    <scope>NUCLEOTIDE SEQUENCE [GENOMIC DNA] (CSH1)</scope>
</reference>
<reference key="2">
    <citation type="journal article" date="1983" name="J. Biol. Chem.">
        <title>Two structurally different genes produce the same secreted human placental lactogen hormone.</title>
        <authorList>
            <person name="Barrera-Saldana H.A."/>
            <person name="Seeburg P.H."/>
            <person name="Saunders G.F."/>
        </authorList>
    </citation>
    <scope>NUCLEOTIDE SEQUENCE [GENOMIC DNA / MRNA]</scope>
</reference>
<reference key="3">
    <citation type="journal article" date="1989" name="Genomics">
        <title>The human growth hormone locus: nucleotide sequence, biology, and evolution.</title>
        <authorList>
            <person name="Chen E.Y."/>
            <person name="Liao Y.C."/>
            <person name="Smith D.H."/>
            <person name="Barrera-Saldana H.A."/>
            <person name="Gelinas R.E."/>
            <person name="Seeburg P.H."/>
        </authorList>
    </citation>
    <scope>NUCLEOTIDE SEQUENCE [GENOMIC DNA]</scope>
</reference>
<reference key="4">
    <citation type="journal article" date="1982" name="DNA">
        <title>The human growth hormone gene family: nucleotide sequences show recent divergence and predict a new polypeptide hormone.</title>
        <authorList>
            <person name="Seeburg P.H."/>
        </authorList>
    </citation>
    <scope>NUCLEOTIDE SEQUENCE [GENOMIC DNA / MRNA]</scope>
</reference>
<reference key="5">
    <citation type="journal article" date="2008" name="Hum. Mutat.">
        <title>Complex signatures of locus-specific selective pressures and gene conversion on human growth hormone/chorionic somatomammotropin genes.</title>
        <authorList>
            <person name="Sedman L."/>
            <person name="Padhukasahasram B."/>
            <person name="Kelgo P."/>
            <person name="Laan M."/>
        </authorList>
    </citation>
    <scope>NUCLEOTIDE SEQUENCE [GENOMIC DNA]</scope>
</reference>
<reference key="6">
    <citation type="submission" date="2003-05" db="EMBL/GenBank/DDBJ databases">
        <title>Cloning of human full-length CDSs in BD Creator(TM) system donor vector.</title>
        <authorList>
            <person name="Kalnine N."/>
            <person name="Chen X."/>
            <person name="Rolfs A."/>
            <person name="Halleck A."/>
            <person name="Hines L."/>
            <person name="Eisenstein S."/>
            <person name="Koundinya M."/>
            <person name="Raphael J."/>
            <person name="Moreira D."/>
            <person name="Kelley T."/>
            <person name="LaBaer J."/>
            <person name="Lin Y."/>
            <person name="Phelan M."/>
            <person name="Farmer A."/>
        </authorList>
    </citation>
    <scope>NUCLEOTIDE SEQUENCE [LARGE SCALE MRNA]</scope>
</reference>
<reference key="7">
    <citation type="journal article" date="2004" name="Genome Res.">
        <title>The status, quality, and expansion of the NIH full-length cDNA project: the Mammalian Gene Collection (MGC).</title>
        <authorList>
            <consortium name="The MGC Project Team"/>
        </authorList>
    </citation>
    <scope>NUCLEOTIDE SEQUENCE [LARGE SCALE MRNA]</scope>
    <source>
        <tissue>Placenta</tissue>
        <tissue>Uterus</tissue>
    </source>
</reference>
<reference key="8">
    <citation type="journal article" date="1977" name="Nature">
        <title>Construction and analysis of recombinant DNA for human chorionic somatomammotropin.</title>
        <authorList>
            <person name="Shine J."/>
            <person name="Seeburg P.H."/>
            <person name="Martial J.A."/>
            <person name="Baxter J.D."/>
            <person name="Goodman H.M."/>
        </authorList>
    </citation>
    <scope>NUCLEOTIDE SEQUENCE [MRNA] OF 50-217</scope>
</reference>
<reference key="9">
    <citation type="journal article" date="1973" name="Arch. Biochem. Biophys.">
        <title>Amino acid sequence of human chorionic somatomammotropin.</title>
        <authorList>
            <person name="Li C.H."/>
            <person name="Dixon J.S."/>
            <person name="Chung D."/>
        </authorList>
    </citation>
    <scope>PROTEIN SEQUENCE OF 27-217</scope>
</reference>
<reference key="10">
    <citation type="journal article" date="1971" name="Nature New Biol.">
        <title>Amino-acid sequence of human placental lactogen.</title>
        <authorList>
            <person name="Sherwood L.M."/>
            <person name="Handwerger S."/>
            <person name="McLaurin W.D."/>
            <person name="Lanner M."/>
        </authorList>
    </citation>
    <scope>PROTEIN SEQUENCE OF 27-217</scope>
</reference>
<reference key="11">
    <citation type="journal article" date="1972" name="Nature New Biol.">
        <authorList>
            <person name="Sherwood L.M."/>
            <person name="Handwerger S."/>
            <person name="McLaurin W.D."/>
            <person name="Lanner M."/>
        </authorList>
    </citation>
    <scope>ERRATUM OF PUBMED:5286363</scope>
</reference>
<reference key="12">
    <citation type="journal article" date="1979" name="J. Biol. Chem.">
        <title>Identification of the interchain disulfide bonds of dimeric human placental lactogen.</title>
        <authorList>
            <person name="Schneider A.B."/>
            <person name="Kowalski K."/>
            <person name="Russell J."/>
            <person name="Sherwood L.M."/>
        </authorList>
    </citation>
    <scope>INTERCHAIN DISULFIDE BONDS</scope>
    <scope>SUBUNIT</scope>
</reference>
<reference key="13">
    <citation type="journal article" date="2006" name="J. Mol. Biol.">
        <title>Crystal structure and site 1 binding energetics of human placental lactogen.</title>
        <authorList>
            <person name="Walsh S.T."/>
            <person name="Kossiakoff A.A."/>
        </authorList>
    </citation>
    <scope>X-RAY CRYSTALLOGRAPHY (2.0 ANGSTROMS) OF 27-217</scope>
    <scope>FUNCTION</scope>
    <scope>ZINC-BINDING SITES</scope>
    <scope>DISULFIDE BONDS</scope>
</reference>
<comment type="function">
    <text evidence="1">Produced only during pregnancy and is involved in stimulating lactation, fetal growth and metabolism. Does not interact with GHR but only activates PRLR through zinc-induced dimerization.</text>
</comment>
<comment type="subunit">
    <text evidence="2">Can be found in a monomeric as well as dimeric form.</text>
</comment>
<comment type="interaction">
    <interactant intactId="EBI-13375302">
        <id>P0DML2</id>
    </interactant>
    <interactant intactId="EBI-750973">
        <id>O00233</id>
        <label>PSMD9</label>
    </interactant>
    <organismsDiffer>false</organismsDiffer>
    <experiments>5</experiments>
</comment>
<comment type="interaction">
    <interactant intactId="EBI-13375302">
        <id>P0DML2</id>
    </interactant>
    <interactant intactId="EBI-744081">
        <id>Q96EQ0</id>
        <label>SGTB</label>
    </interactant>
    <organismsDiffer>false</organismsDiffer>
    <experiments>3</experiments>
</comment>
<comment type="subcellular location">
    <subcellularLocation>
        <location>Secreted</location>
    </subcellularLocation>
</comment>
<comment type="miscellaneous">
    <text>CSH1 sequence only differs from CSH2 sequence in 1 aa.</text>
</comment>
<comment type="similarity">
    <text evidence="5">Belongs to the somatotropin/prolactin family.</text>
</comment>
<accession>P0DML2</accession>
<accession>P01243</accession>
<accession>Q0VDB1</accession>
<accession>Q14407</accession>
<evidence type="ECO:0000269" key="1">
    <source>
    </source>
</evidence>
<evidence type="ECO:0000269" key="2">
    <source>
    </source>
</evidence>
<evidence type="ECO:0000269" key="3">
    <source>
    </source>
</evidence>
<evidence type="ECO:0000269" key="4">
    <source>
    </source>
</evidence>
<evidence type="ECO:0000305" key="5"/>
<evidence type="ECO:0007829" key="6">
    <source>
        <dbReference type="PDB" id="1Z7C"/>
    </source>
</evidence>
<gene>
    <name type="primary">CSH1</name>
</gene>
<proteinExistence type="evidence at protein level"/>